<evidence type="ECO:0000255" key="1">
    <source>
        <dbReference type="HAMAP-Rule" id="MF_01496"/>
    </source>
</evidence>
<sequence>METLFNGTLLVGGRDQDSTGFAWWAGNARLINLSGKLLGAHVAHAGLIVFWAGAMNLFEVAHFVPEKPMYEQGLILLPHLATLGWGVGPGGEVIDTFPYFVSGVLHLISSAVLGFGGVYHSLIGPETLEESFPFFGYVWKDKNKMTTILGIHLILLGAGALLLVGKAMYFGGVYDTWAPGGGDVRVITNPTGNPATIFGYLLKSPFGGEGWICSVDNMEDIIGGHLWIGFICIAGGIWHILTKPFAWARRALVWSGEAYLSYSLGAVSVMAFTACCFVWFNNTAYPSEFYGPTGPEASQAQAFTFLVRDQRLGANVGSAQGPTGLGKYLMRSPTGEIIFGGETMRFWDLRAPWLEPLRGPNGLDLNKLRNDIQPWQERRSAEYMTHAPLGSLNSVGGVATEINAVNYVSPRSWLSTSHFVLGFFFFVAHLWHAGRARAAAAGFEKGIERETEPALSMKPLN</sequence>
<accession>Q19VC6</accession>
<proteinExistence type="inferred from homology"/>
<geneLocation type="chloroplast"/>
<protein>
    <recommendedName>
        <fullName evidence="1">Photosystem II CP43 reaction center protein</fullName>
    </recommendedName>
    <alternativeName>
        <fullName evidence="1">PSII 43 kDa protein</fullName>
    </alternativeName>
    <alternativeName>
        <fullName evidence="1">Protein CP-43</fullName>
    </alternativeName>
</protein>
<gene>
    <name evidence="1" type="primary">psbC</name>
</gene>
<feature type="propeptide" id="PRO_0000431127" evidence="1">
    <location>
        <begin position="1"/>
        <end position="2"/>
    </location>
</feature>
<feature type="chain" id="PRO_0000361348" description="Photosystem II CP43 reaction center protein" evidence="1">
    <location>
        <begin position="3"/>
        <end position="461"/>
    </location>
</feature>
<feature type="transmembrane region" description="Helical" evidence="1">
    <location>
        <begin position="57"/>
        <end position="81"/>
    </location>
</feature>
<feature type="transmembrane region" description="Helical" evidence="1">
    <location>
        <begin position="122"/>
        <end position="143"/>
    </location>
</feature>
<feature type="transmembrane region" description="Helical" evidence="1">
    <location>
        <begin position="166"/>
        <end position="188"/>
    </location>
</feature>
<feature type="transmembrane region" description="Helical" evidence="1">
    <location>
        <begin position="243"/>
        <end position="263"/>
    </location>
</feature>
<feature type="transmembrane region" description="Helical" evidence="1">
    <location>
        <begin position="279"/>
        <end position="300"/>
    </location>
</feature>
<feature type="transmembrane region" description="Helical" evidence="1">
    <location>
        <begin position="435"/>
        <end position="459"/>
    </location>
</feature>
<feature type="binding site" evidence="1">
    <location>
        <position position="355"/>
    </location>
    <ligand>
        <name>[CaMn4O5] cluster</name>
        <dbReference type="ChEBI" id="CHEBI:189552"/>
    </ligand>
</feature>
<feature type="modified residue" description="N-acetylthreonine" evidence="1">
    <location>
        <position position="3"/>
    </location>
</feature>
<feature type="modified residue" description="Phosphothreonine" evidence="1">
    <location>
        <position position="3"/>
    </location>
</feature>
<comment type="function">
    <text evidence="1">One of the components of the core complex of photosystem II (PSII). It binds chlorophyll and helps catalyze the primary light-induced photochemical processes of PSII. PSII is a light-driven water:plastoquinone oxidoreductase, using light energy to abstract electrons from H(2)O, generating O(2) and a proton gradient subsequently used for ATP formation.</text>
</comment>
<comment type="cofactor">
    <text evidence="1">Binds multiple chlorophylls and provides some of the ligands for the Ca-4Mn-5O cluster of the oxygen-evolving complex. It may also provide a ligand for a Cl- that is required for oxygen evolution. PSII binds additional chlorophylls, carotenoids and specific lipids.</text>
</comment>
<comment type="subunit">
    <text evidence="1">PSII is composed of 1 copy each of membrane proteins PsbA, PsbB, PsbC, PsbD, PsbE, PsbF, PsbH, PsbI, PsbJ, PsbK, PsbL, PsbM, PsbT, PsbX, PsbY, PsbZ, Psb30/Ycf12, at least 3 peripheral proteins of the oxygen-evolving complex and a large number of cofactors. It forms dimeric complexes.</text>
</comment>
<comment type="subcellular location">
    <subcellularLocation>
        <location evidence="1">Plastid</location>
        <location evidence="1">Chloroplast thylakoid membrane</location>
        <topology evidence="1">Multi-pass membrane protein</topology>
    </subcellularLocation>
</comment>
<comment type="similarity">
    <text evidence="1">Belongs to the PsbB/PsbC family. PsbC subfamily.</text>
</comment>
<name>PSBC_CHLAT</name>
<reference key="1">
    <citation type="journal article" date="2007" name="BMC Biol.">
        <title>A clade uniting the green algae Mesostigma viride and Chlorokybus atmophyticus represents the deepest branch of the Streptophyta in chloroplast genome-based phylogenies.</title>
        <authorList>
            <person name="Lemieux C."/>
            <person name="Otis C."/>
            <person name="Turmel M."/>
        </authorList>
    </citation>
    <scope>NUCLEOTIDE SEQUENCE [LARGE SCALE GENOMIC DNA]</scope>
    <source>
        <strain>SAG 48.80</strain>
    </source>
</reference>
<dbReference type="EMBL" id="DQ422812">
    <property type="protein sequence ID" value="ABD62213.2"/>
    <property type="molecule type" value="Genomic_DNA"/>
</dbReference>
<dbReference type="RefSeq" id="YP_001019066.1">
    <property type="nucleotide sequence ID" value="NC_008822.1"/>
</dbReference>
<dbReference type="SMR" id="Q19VC6"/>
<dbReference type="GeneID" id="4783235"/>
<dbReference type="GO" id="GO:0009535">
    <property type="term" value="C:chloroplast thylakoid membrane"/>
    <property type="evidence" value="ECO:0007669"/>
    <property type="project" value="UniProtKB-SubCell"/>
</dbReference>
<dbReference type="GO" id="GO:0009523">
    <property type="term" value="C:photosystem II"/>
    <property type="evidence" value="ECO:0007669"/>
    <property type="project" value="UniProtKB-KW"/>
</dbReference>
<dbReference type="GO" id="GO:0016168">
    <property type="term" value="F:chlorophyll binding"/>
    <property type="evidence" value="ECO:0007669"/>
    <property type="project" value="UniProtKB-UniRule"/>
</dbReference>
<dbReference type="GO" id="GO:0045156">
    <property type="term" value="F:electron transporter, transferring electrons within the cyclic electron transport pathway of photosynthesis activity"/>
    <property type="evidence" value="ECO:0007669"/>
    <property type="project" value="InterPro"/>
</dbReference>
<dbReference type="GO" id="GO:0046872">
    <property type="term" value="F:metal ion binding"/>
    <property type="evidence" value="ECO:0007669"/>
    <property type="project" value="UniProtKB-KW"/>
</dbReference>
<dbReference type="GO" id="GO:0009772">
    <property type="term" value="P:photosynthetic electron transport in photosystem II"/>
    <property type="evidence" value="ECO:0007669"/>
    <property type="project" value="InterPro"/>
</dbReference>
<dbReference type="FunFam" id="1.10.10.670:FF:000001">
    <property type="entry name" value="Photosystem II CP43 reaction center protein"/>
    <property type="match status" value="1"/>
</dbReference>
<dbReference type="Gene3D" id="1.10.10.670">
    <property type="entry name" value="photosystem ii from thermosynechococcus elongatus"/>
    <property type="match status" value="1"/>
</dbReference>
<dbReference type="HAMAP" id="MF_01496">
    <property type="entry name" value="PSII_PsbC_CP43"/>
    <property type="match status" value="1"/>
</dbReference>
<dbReference type="InterPro" id="IPR000932">
    <property type="entry name" value="PS_antenna-like"/>
</dbReference>
<dbReference type="InterPro" id="IPR036001">
    <property type="entry name" value="PS_II_antenna-like_sf"/>
</dbReference>
<dbReference type="InterPro" id="IPR005869">
    <property type="entry name" value="PSII_PsbC"/>
</dbReference>
<dbReference type="InterPro" id="IPR044900">
    <property type="entry name" value="PSII_PsbC_sf"/>
</dbReference>
<dbReference type="NCBIfam" id="TIGR01153">
    <property type="entry name" value="psbC"/>
    <property type="match status" value="1"/>
</dbReference>
<dbReference type="Pfam" id="PF00421">
    <property type="entry name" value="PSII"/>
    <property type="match status" value="1"/>
</dbReference>
<dbReference type="SUPFAM" id="SSF161077">
    <property type="entry name" value="Photosystem II antenna protein-like"/>
    <property type="match status" value="1"/>
</dbReference>
<organism>
    <name type="scientific">Chlorokybus atmophyticus</name>
    <name type="common">Soil alga</name>
    <dbReference type="NCBI Taxonomy" id="3144"/>
    <lineage>
        <taxon>Eukaryota</taxon>
        <taxon>Viridiplantae</taxon>
        <taxon>Streptophyta</taxon>
        <taxon>Chlorokybophyceae</taxon>
        <taxon>Chlorokybales</taxon>
        <taxon>Chlorokybaceae</taxon>
        <taxon>Chlorokybus</taxon>
    </lineage>
</organism>
<keyword id="KW-0007">Acetylation</keyword>
<keyword id="KW-0148">Chlorophyll</keyword>
<keyword id="KW-0150">Chloroplast</keyword>
<keyword id="KW-0157">Chromophore</keyword>
<keyword id="KW-0464">Manganese</keyword>
<keyword id="KW-0472">Membrane</keyword>
<keyword id="KW-0479">Metal-binding</keyword>
<keyword id="KW-0597">Phosphoprotein</keyword>
<keyword id="KW-0602">Photosynthesis</keyword>
<keyword id="KW-0604">Photosystem II</keyword>
<keyword id="KW-0934">Plastid</keyword>
<keyword id="KW-0793">Thylakoid</keyword>
<keyword id="KW-0812">Transmembrane</keyword>
<keyword id="KW-1133">Transmembrane helix</keyword>